<reference key="1">
    <citation type="journal article" date="2011" name="Stand. Genomic Sci.">
        <title>Complete genome sequence of 'Thioalkalivibrio sulfidophilus' HL-EbGr7.</title>
        <authorList>
            <person name="Muyzer G."/>
            <person name="Sorokin D.Y."/>
            <person name="Mavromatis K."/>
            <person name="Lapidus A."/>
            <person name="Clum A."/>
            <person name="Ivanova N."/>
            <person name="Pati A."/>
            <person name="d'Haeseleer P."/>
            <person name="Woyke T."/>
            <person name="Kyrpides N.C."/>
        </authorList>
    </citation>
    <scope>NUCLEOTIDE SEQUENCE [LARGE SCALE GENOMIC DNA]</scope>
    <source>
        <strain>HL-EbGR7</strain>
    </source>
</reference>
<feature type="chain" id="PRO_1000184555" description="Peptide methionine sulfoxide reductase MsrB">
    <location>
        <begin position="1"/>
        <end position="137"/>
    </location>
</feature>
<feature type="domain" description="MsrB" evidence="2">
    <location>
        <begin position="13"/>
        <end position="135"/>
    </location>
</feature>
<feature type="region of interest" description="Disordered" evidence="3">
    <location>
        <begin position="1"/>
        <end position="33"/>
    </location>
</feature>
<feature type="active site" description="Nucleophile" evidence="2">
    <location>
        <position position="124"/>
    </location>
</feature>
<feature type="binding site" evidence="2">
    <location>
        <position position="52"/>
    </location>
    <ligand>
        <name>Zn(2+)</name>
        <dbReference type="ChEBI" id="CHEBI:29105"/>
    </ligand>
</feature>
<feature type="binding site" evidence="2">
    <location>
        <position position="55"/>
    </location>
    <ligand>
        <name>Zn(2+)</name>
        <dbReference type="ChEBI" id="CHEBI:29105"/>
    </ligand>
</feature>
<feature type="binding site" evidence="2">
    <location>
        <position position="101"/>
    </location>
    <ligand>
        <name>Zn(2+)</name>
        <dbReference type="ChEBI" id="CHEBI:29105"/>
    </ligand>
</feature>
<feature type="binding site" evidence="2">
    <location>
        <position position="104"/>
    </location>
    <ligand>
        <name>Zn(2+)</name>
        <dbReference type="ChEBI" id="CHEBI:29105"/>
    </ligand>
</feature>
<comment type="catalytic activity">
    <reaction evidence="1">
        <text>L-methionyl-[protein] + [thioredoxin]-disulfide + H2O = L-methionyl-(R)-S-oxide-[protein] + [thioredoxin]-dithiol</text>
        <dbReference type="Rhea" id="RHEA:24164"/>
        <dbReference type="Rhea" id="RHEA-COMP:10698"/>
        <dbReference type="Rhea" id="RHEA-COMP:10700"/>
        <dbReference type="Rhea" id="RHEA-COMP:12313"/>
        <dbReference type="Rhea" id="RHEA-COMP:12314"/>
        <dbReference type="ChEBI" id="CHEBI:15377"/>
        <dbReference type="ChEBI" id="CHEBI:16044"/>
        <dbReference type="ChEBI" id="CHEBI:29950"/>
        <dbReference type="ChEBI" id="CHEBI:45764"/>
        <dbReference type="ChEBI" id="CHEBI:50058"/>
        <dbReference type="EC" id="1.8.4.12"/>
    </reaction>
</comment>
<comment type="cofactor">
    <cofactor evidence="1">
        <name>Zn(2+)</name>
        <dbReference type="ChEBI" id="CHEBI:29105"/>
    </cofactor>
    <text evidence="1">Binds 1 zinc ion per subunit. The zinc ion is important for the structural integrity of the protein.</text>
</comment>
<comment type="similarity">
    <text evidence="1">Belongs to the MsrB Met sulfoxide reductase family.</text>
</comment>
<organism>
    <name type="scientific">Thioalkalivibrio sulfidiphilus (strain HL-EbGR7)</name>
    <dbReference type="NCBI Taxonomy" id="396588"/>
    <lineage>
        <taxon>Bacteria</taxon>
        <taxon>Pseudomonadati</taxon>
        <taxon>Pseudomonadota</taxon>
        <taxon>Gammaproteobacteria</taxon>
        <taxon>Chromatiales</taxon>
        <taxon>Ectothiorhodospiraceae</taxon>
        <taxon>Thioalkalivibrio</taxon>
    </lineage>
</organism>
<sequence length="137" mass="15324">MSNNQDRPGQITDESLRERLSPEAYAVTRRAGTEPPFSGRYYDHHETGIYHCICCDAPLFSSEHKFDSGSGWPSYWQPVSGDALSVVRDTSHGMIREEVRCARCDAHLGHVFPDGPPPTGLRYCINSLSLDFKAAHK</sequence>
<dbReference type="EC" id="1.8.4.12" evidence="1"/>
<dbReference type="EMBL" id="CP001339">
    <property type="protein sequence ID" value="ACL71797.1"/>
    <property type="molecule type" value="Genomic_DNA"/>
</dbReference>
<dbReference type="RefSeq" id="WP_012637285.1">
    <property type="nucleotide sequence ID" value="NC_011901.1"/>
</dbReference>
<dbReference type="SMR" id="B8GMG5"/>
<dbReference type="STRING" id="396588.Tgr7_0705"/>
<dbReference type="KEGG" id="tgr:Tgr7_0705"/>
<dbReference type="eggNOG" id="COG0229">
    <property type="taxonomic scope" value="Bacteria"/>
</dbReference>
<dbReference type="HOGENOM" id="CLU_031040_8_5_6"/>
<dbReference type="OrthoDB" id="9785497at2"/>
<dbReference type="Proteomes" id="UP000002383">
    <property type="component" value="Chromosome"/>
</dbReference>
<dbReference type="GO" id="GO:0005737">
    <property type="term" value="C:cytoplasm"/>
    <property type="evidence" value="ECO:0007669"/>
    <property type="project" value="TreeGrafter"/>
</dbReference>
<dbReference type="GO" id="GO:0033743">
    <property type="term" value="F:peptide-methionine (R)-S-oxide reductase activity"/>
    <property type="evidence" value="ECO:0007669"/>
    <property type="project" value="UniProtKB-UniRule"/>
</dbReference>
<dbReference type="GO" id="GO:0008270">
    <property type="term" value="F:zinc ion binding"/>
    <property type="evidence" value="ECO:0007669"/>
    <property type="project" value="UniProtKB-UniRule"/>
</dbReference>
<dbReference type="GO" id="GO:0030091">
    <property type="term" value="P:protein repair"/>
    <property type="evidence" value="ECO:0007669"/>
    <property type="project" value="InterPro"/>
</dbReference>
<dbReference type="GO" id="GO:0006979">
    <property type="term" value="P:response to oxidative stress"/>
    <property type="evidence" value="ECO:0007669"/>
    <property type="project" value="InterPro"/>
</dbReference>
<dbReference type="FunFam" id="2.170.150.20:FF:000001">
    <property type="entry name" value="Peptide methionine sulfoxide reductase MsrB"/>
    <property type="match status" value="1"/>
</dbReference>
<dbReference type="Gene3D" id="2.170.150.20">
    <property type="entry name" value="Peptide methionine sulfoxide reductase"/>
    <property type="match status" value="1"/>
</dbReference>
<dbReference type="HAMAP" id="MF_01400">
    <property type="entry name" value="MsrB"/>
    <property type="match status" value="1"/>
</dbReference>
<dbReference type="InterPro" id="IPR028427">
    <property type="entry name" value="Met_Sox_Rdtase_MsrB"/>
</dbReference>
<dbReference type="InterPro" id="IPR002579">
    <property type="entry name" value="Met_Sox_Rdtase_MsrB_dom"/>
</dbReference>
<dbReference type="InterPro" id="IPR011057">
    <property type="entry name" value="Mss4-like_sf"/>
</dbReference>
<dbReference type="NCBIfam" id="TIGR00357">
    <property type="entry name" value="peptide-methionine (R)-S-oxide reductase MsrB"/>
    <property type="match status" value="1"/>
</dbReference>
<dbReference type="PANTHER" id="PTHR10173">
    <property type="entry name" value="METHIONINE SULFOXIDE REDUCTASE"/>
    <property type="match status" value="1"/>
</dbReference>
<dbReference type="PANTHER" id="PTHR10173:SF52">
    <property type="entry name" value="METHIONINE-R-SULFOXIDE REDUCTASE B1"/>
    <property type="match status" value="1"/>
</dbReference>
<dbReference type="Pfam" id="PF01641">
    <property type="entry name" value="SelR"/>
    <property type="match status" value="1"/>
</dbReference>
<dbReference type="SUPFAM" id="SSF51316">
    <property type="entry name" value="Mss4-like"/>
    <property type="match status" value="1"/>
</dbReference>
<dbReference type="PROSITE" id="PS51790">
    <property type="entry name" value="MSRB"/>
    <property type="match status" value="1"/>
</dbReference>
<proteinExistence type="inferred from homology"/>
<protein>
    <recommendedName>
        <fullName evidence="1">Peptide methionine sulfoxide reductase MsrB</fullName>
        <ecNumber evidence="1">1.8.4.12</ecNumber>
    </recommendedName>
    <alternativeName>
        <fullName evidence="1">Peptide-methionine (R)-S-oxide reductase</fullName>
    </alternativeName>
</protein>
<keyword id="KW-0479">Metal-binding</keyword>
<keyword id="KW-0560">Oxidoreductase</keyword>
<keyword id="KW-1185">Reference proteome</keyword>
<keyword id="KW-0862">Zinc</keyword>
<evidence type="ECO:0000255" key="1">
    <source>
        <dbReference type="HAMAP-Rule" id="MF_01400"/>
    </source>
</evidence>
<evidence type="ECO:0000255" key="2">
    <source>
        <dbReference type="PROSITE-ProRule" id="PRU01126"/>
    </source>
</evidence>
<evidence type="ECO:0000256" key="3">
    <source>
        <dbReference type="SAM" id="MobiDB-lite"/>
    </source>
</evidence>
<accession>B8GMG5</accession>
<gene>
    <name evidence="1" type="primary">msrB</name>
    <name type="ordered locus">Tgr7_0705</name>
</gene>
<name>MSRB_THISH</name>